<keyword id="KW-0050">Antiport</keyword>
<keyword id="KW-0997">Cell inner membrane</keyword>
<keyword id="KW-1003">Cell membrane</keyword>
<keyword id="KW-0406">Ion transport</keyword>
<keyword id="KW-0472">Membrane</keyword>
<keyword id="KW-0630">Potassium</keyword>
<keyword id="KW-0633">Potassium transport</keyword>
<keyword id="KW-0812">Transmembrane</keyword>
<keyword id="KW-1133">Transmembrane helix</keyword>
<keyword id="KW-0813">Transport</keyword>
<reference key="1">
    <citation type="journal article" date="2009" name="PLoS ONE">
        <title>Salmonella paratyphi C: genetic divergence from Salmonella choleraesuis and pathogenic convergence with Salmonella typhi.</title>
        <authorList>
            <person name="Liu W.-Q."/>
            <person name="Feng Y."/>
            <person name="Wang Y."/>
            <person name="Zou Q.-H."/>
            <person name="Chen F."/>
            <person name="Guo J.-T."/>
            <person name="Peng Y.-H."/>
            <person name="Jin Y."/>
            <person name="Li Y.-G."/>
            <person name="Hu S.-N."/>
            <person name="Johnston R.N."/>
            <person name="Liu G.-R."/>
            <person name="Liu S.-L."/>
        </authorList>
    </citation>
    <scope>NUCLEOTIDE SEQUENCE [LARGE SCALE GENOMIC DNA]</scope>
    <source>
        <strain>RKS4594</strain>
    </source>
</reference>
<sequence>MEGADLLTAGVLFLFAAVAAVPLAARLGIGAVLGYLLAGIAIGPWGLGFISDVDEILHFSELGVVFLMFIIGLELNPSRLWQLRRSIFGVGAAQVLLSAAVLAGLLMLADFLWQAAVVGGIGLAMSSTAMALQLMREKGMNRSESGQLGFSVLLFQDLAVIPALALVPLLAGSADEHFDWFKVAMKVLAFAVMLIGGRYLLRPVFRFIAASGVREVFTAATLLLVLSAALFMDALGLSMALGTFIAGVLLAESEYRHELENAIDPFKGLLLGLFFISVGMSLNLGVLYTHLLWVAASVVILVVIKMLTLYLLARLYGIRSSERMQFASVLSQGGEFAFVLFSTASSQRLFQGDQMALLLVTVTLSMMTTPLLMKGIDKWLSHRLNGPEENDEKPWVEDDKPQVIVVGFGRFGQVIARLLMANKMRITVLERDIGAVNLMRKYGYKVYYGDATQVELLRSAGAEAAESIVITCNEPEDTMKLVALCQQHFPHLHILARARGRVEAHELLQAGVTQFSRETFSSALELGRKTLVSLGMHPHQAQRAQLHFRRLDMRILRELIPEHSDMVQISRAREARRELEEIFQREMQQERRQLDGWDEFE</sequence>
<protein>
    <recommendedName>
        <fullName evidence="1">Glutathione-regulated potassium-efflux system protein KefB</fullName>
    </recommendedName>
    <alternativeName>
        <fullName evidence="1">K(+)/H(+) antiporter</fullName>
    </alternativeName>
</protein>
<evidence type="ECO:0000255" key="1">
    <source>
        <dbReference type="HAMAP-Rule" id="MF_01412"/>
    </source>
</evidence>
<evidence type="ECO:0000255" key="2">
    <source>
        <dbReference type="PROSITE-ProRule" id="PRU00543"/>
    </source>
</evidence>
<feature type="chain" id="PRO_1000184614" description="Glutathione-regulated potassium-efflux system protein KefB">
    <location>
        <begin position="1"/>
        <end position="601"/>
    </location>
</feature>
<feature type="transmembrane region" description="Helical" evidence="1">
    <location>
        <begin position="4"/>
        <end position="24"/>
    </location>
</feature>
<feature type="transmembrane region" description="Helical" evidence="1">
    <location>
        <begin position="29"/>
        <end position="49"/>
    </location>
</feature>
<feature type="transmembrane region" description="Helical" evidence="1">
    <location>
        <begin position="55"/>
        <end position="75"/>
    </location>
</feature>
<feature type="transmembrane region" description="Helical" evidence="1">
    <location>
        <begin position="87"/>
        <end position="107"/>
    </location>
</feature>
<feature type="transmembrane region" description="Helical" evidence="1">
    <location>
        <begin position="111"/>
        <end position="131"/>
    </location>
</feature>
<feature type="transmembrane region" description="Helical" evidence="1">
    <location>
        <begin position="152"/>
        <end position="172"/>
    </location>
</feature>
<feature type="transmembrane region" description="Helical" evidence="1">
    <location>
        <begin position="177"/>
        <end position="197"/>
    </location>
</feature>
<feature type="transmembrane region" description="Helical" evidence="1">
    <location>
        <begin position="207"/>
        <end position="227"/>
    </location>
</feature>
<feature type="transmembrane region" description="Helical" evidence="1">
    <location>
        <begin position="230"/>
        <end position="250"/>
    </location>
</feature>
<feature type="transmembrane region" description="Helical" evidence="1">
    <location>
        <begin position="262"/>
        <end position="282"/>
    </location>
</feature>
<feature type="transmembrane region" description="Helical" evidence="1">
    <location>
        <begin position="284"/>
        <end position="304"/>
    </location>
</feature>
<feature type="transmembrane region" description="Helical" evidence="1">
    <location>
        <begin position="324"/>
        <end position="344"/>
    </location>
</feature>
<feature type="transmembrane region" description="Helical" evidence="1">
    <location>
        <begin position="356"/>
        <end position="376"/>
    </location>
</feature>
<feature type="domain" description="RCK N-terminal" evidence="2">
    <location>
        <begin position="400"/>
        <end position="519"/>
    </location>
</feature>
<name>KEFB_SALPC</name>
<organism>
    <name type="scientific">Salmonella paratyphi C (strain RKS4594)</name>
    <dbReference type="NCBI Taxonomy" id="476213"/>
    <lineage>
        <taxon>Bacteria</taxon>
        <taxon>Pseudomonadati</taxon>
        <taxon>Pseudomonadota</taxon>
        <taxon>Gammaproteobacteria</taxon>
        <taxon>Enterobacterales</taxon>
        <taxon>Enterobacteriaceae</taxon>
        <taxon>Salmonella</taxon>
    </lineage>
</organism>
<proteinExistence type="inferred from homology"/>
<gene>
    <name evidence="1" type="primary">kefB</name>
    <name type="ordered locus">SPC_3526</name>
</gene>
<comment type="function">
    <text evidence="1">Pore-forming subunit of a potassium efflux system that confers protection against electrophiles. Catalyzes K(+)/H(+) antiport.</text>
</comment>
<comment type="subunit">
    <text evidence="1">Interacts with the regulatory subunit KefG.</text>
</comment>
<comment type="subcellular location">
    <subcellularLocation>
        <location evidence="1">Cell inner membrane</location>
        <topology evidence="1">Multi-pass membrane protein</topology>
    </subcellularLocation>
</comment>
<comment type="similarity">
    <text evidence="1">Belongs to the monovalent cation:proton antiporter 2 (CPA2) transporter (TC 2.A.37) family. KefB subfamily.</text>
</comment>
<dbReference type="EMBL" id="CP000857">
    <property type="protein sequence ID" value="ACN47610.1"/>
    <property type="molecule type" value="Genomic_DNA"/>
</dbReference>
<dbReference type="RefSeq" id="WP_000398130.1">
    <property type="nucleotide sequence ID" value="NC_012125.1"/>
</dbReference>
<dbReference type="SMR" id="C0Q0D3"/>
<dbReference type="KEGG" id="sei:SPC_3526"/>
<dbReference type="HOGENOM" id="CLU_005126_9_3_6"/>
<dbReference type="Proteomes" id="UP000001599">
    <property type="component" value="Chromosome"/>
</dbReference>
<dbReference type="GO" id="GO:0005886">
    <property type="term" value="C:plasma membrane"/>
    <property type="evidence" value="ECO:0007669"/>
    <property type="project" value="UniProtKB-SubCell"/>
</dbReference>
<dbReference type="GO" id="GO:0015503">
    <property type="term" value="F:glutathione-regulated potassium exporter activity"/>
    <property type="evidence" value="ECO:0007669"/>
    <property type="project" value="UniProtKB-UniRule"/>
</dbReference>
<dbReference type="GO" id="GO:1902600">
    <property type="term" value="P:proton transmembrane transport"/>
    <property type="evidence" value="ECO:0007669"/>
    <property type="project" value="InterPro"/>
</dbReference>
<dbReference type="FunFam" id="1.20.1530.20:FF:000001">
    <property type="entry name" value="Glutathione-regulated potassium-efflux system protein KefB"/>
    <property type="match status" value="1"/>
</dbReference>
<dbReference type="FunFam" id="3.40.50.720:FF:000036">
    <property type="entry name" value="Glutathione-regulated potassium-efflux system protein KefB"/>
    <property type="match status" value="1"/>
</dbReference>
<dbReference type="Gene3D" id="1.20.1530.20">
    <property type="match status" value="1"/>
</dbReference>
<dbReference type="Gene3D" id="3.40.50.720">
    <property type="entry name" value="NAD(P)-binding Rossmann-like Domain"/>
    <property type="match status" value="1"/>
</dbReference>
<dbReference type="HAMAP" id="MF_01412">
    <property type="entry name" value="K_H_efflux_KefB"/>
    <property type="match status" value="1"/>
</dbReference>
<dbReference type="InterPro" id="IPR006153">
    <property type="entry name" value="Cation/H_exchanger_TM"/>
</dbReference>
<dbReference type="InterPro" id="IPR004771">
    <property type="entry name" value="K/H_exchanger"/>
</dbReference>
<dbReference type="InterPro" id="IPR020884">
    <property type="entry name" value="K_H_efflux_KefB"/>
</dbReference>
<dbReference type="InterPro" id="IPR006036">
    <property type="entry name" value="K_uptake_TrkA"/>
</dbReference>
<dbReference type="InterPro" id="IPR038770">
    <property type="entry name" value="Na+/solute_symporter_sf"/>
</dbReference>
<dbReference type="InterPro" id="IPR036291">
    <property type="entry name" value="NAD(P)-bd_dom_sf"/>
</dbReference>
<dbReference type="InterPro" id="IPR003148">
    <property type="entry name" value="RCK_N"/>
</dbReference>
<dbReference type="NCBIfam" id="TIGR00932">
    <property type="entry name" value="2a37"/>
    <property type="match status" value="1"/>
</dbReference>
<dbReference type="NCBIfam" id="NF002973">
    <property type="entry name" value="PRK03659.1"/>
    <property type="match status" value="1"/>
</dbReference>
<dbReference type="PANTHER" id="PTHR46157">
    <property type="entry name" value="K(+) EFFLUX ANTIPORTER 3, CHLOROPLASTIC"/>
    <property type="match status" value="1"/>
</dbReference>
<dbReference type="PANTHER" id="PTHR46157:SF4">
    <property type="entry name" value="K(+) EFFLUX ANTIPORTER 3, CHLOROPLASTIC"/>
    <property type="match status" value="1"/>
</dbReference>
<dbReference type="Pfam" id="PF00999">
    <property type="entry name" value="Na_H_Exchanger"/>
    <property type="match status" value="1"/>
</dbReference>
<dbReference type="Pfam" id="PF02254">
    <property type="entry name" value="TrkA_N"/>
    <property type="match status" value="1"/>
</dbReference>
<dbReference type="PRINTS" id="PR00335">
    <property type="entry name" value="KUPTAKETRKA"/>
</dbReference>
<dbReference type="SUPFAM" id="SSF51735">
    <property type="entry name" value="NAD(P)-binding Rossmann-fold domains"/>
    <property type="match status" value="1"/>
</dbReference>
<dbReference type="PROSITE" id="PS51201">
    <property type="entry name" value="RCK_N"/>
    <property type="match status" value="1"/>
</dbReference>
<accession>C0Q0D3</accession>